<protein>
    <recommendedName>
        <fullName evidence="1">Homoserine kinase</fullName>
        <shortName evidence="1">HK</shortName>
        <shortName evidence="1">HSK</shortName>
        <ecNumber evidence="1">2.7.1.39</ecNumber>
    </recommendedName>
</protein>
<evidence type="ECO:0000255" key="1">
    <source>
        <dbReference type="HAMAP-Rule" id="MF_00301"/>
    </source>
</evidence>
<name>KHSE_BURM7</name>
<proteinExistence type="inferred from homology"/>
<reference key="1">
    <citation type="journal article" date="2010" name="Genome Biol. Evol.">
        <title>Continuing evolution of Burkholderia mallei through genome reduction and large-scale rearrangements.</title>
        <authorList>
            <person name="Losada L."/>
            <person name="Ronning C.M."/>
            <person name="DeShazer D."/>
            <person name="Woods D."/>
            <person name="Fedorova N."/>
            <person name="Kim H.S."/>
            <person name="Shabalina S.A."/>
            <person name="Pearson T.R."/>
            <person name="Brinkac L."/>
            <person name="Tan P."/>
            <person name="Nandi T."/>
            <person name="Crabtree J."/>
            <person name="Badger J."/>
            <person name="Beckstrom-Sternberg S."/>
            <person name="Saqib M."/>
            <person name="Schutzer S.E."/>
            <person name="Keim P."/>
            <person name="Nierman W.C."/>
        </authorList>
    </citation>
    <scope>NUCLEOTIDE SEQUENCE [LARGE SCALE GENOMIC DNA]</scope>
    <source>
        <strain>NCTC 10247</strain>
    </source>
</reference>
<keyword id="KW-0028">Amino-acid biosynthesis</keyword>
<keyword id="KW-0067">ATP-binding</keyword>
<keyword id="KW-0418">Kinase</keyword>
<keyword id="KW-0547">Nucleotide-binding</keyword>
<keyword id="KW-0791">Threonine biosynthesis</keyword>
<keyword id="KW-0808">Transferase</keyword>
<accession>A3MBA7</accession>
<organism>
    <name type="scientific">Burkholderia mallei (strain NCTC 10247)</name>
    <dbReference type="NCBI Taxonomy" id="320389"/>
    <lineage>
        <taxon>Bacteria</taxon>
        <taxon>Pseudomonadati</taxon>
        <taxon>Pseudomonadota</taxon>
        <taxon>Betaproteobacteria</taxon>
        <taxon>Burkholderiales</taxon>
        <taxon>Burkholderiaceae</taxon>
        <taxon>Burkholderia</taxon>
        <taxon>pseudomallei group</taxon>
    </lineage>
</organism>
<comment type="catalytic activity">
    <reaction evidence="1">
        <text>L-homoserine + ATP = O-phospho-L-homoserine + ADP + H(+)</text>
        <dbReference type="Rhea" id="RHEA:13985"/>
        <dbReference type="ChEBI" id="CHEBI:15378"/>
        <dbReference type="ChEBI" id="CHEBI:30616"/>
        <dbReference type="ChEBI" id="CHEBI:57476"/>
        <dbReference type="ChEBI" id="CHEBI:57590"/>
        <dbReference type="ChEBI" id="CHEBI:456216"/>
        <dbReference type="EC" id="2.7.1.39"/>
    </reaction>
</comment>
<comment type="pathway">
    <text evidence="1">Amino-acid biosynthesis; L-threonine biosynthesis; L-threonine from L-aspartate: step 4/5.</text>
</comment>
<comment type="similarity">
    <text evidence="1">Belongs to the pseudomonas-type ThrB family.</text>
</comment>
<feature type="chain" id="PRO_1000022577" description="Homoserine kinase">
    <location>
        <begin position="1"/>
        <end position="331"/>
    </location>
</feature>
<sequence length="331" mass="36779">MAVFTAVSDADLALWMRHYDLGDVVAFRGIPSGIENSNFFLTTTRGEYVLTIFENLTAGQLPFYVDLMSHLAKHGVPVPAPVARDDGTLFGELHGKPAAIVTKLEGAAQLAPGVEHCVEVGQMLARMHLAGRDYPRHQPNLRSLPWWRDTVPAIAPFVTGEQRALLEGELAHQAAFFASDDYAALPEGPCHCDLFRDNALFAHAEPDTGHSVRLGGFFDFYFAGCDKWLFDVAVTVNDWCVDLPTGALDAARADALLRAYQTVRPFTAGERRRWGDMLRAGAYRFWVSRLYDFHLPRAAQMLKPHDPGHFERILRERIAHAGALPETHACN</sequence>
<gene>
    <name evidence="1" type="primary">thrB</name>
    <name type="ordered locus">BMA10247_A0338</name>
</gene>
<dbReference type="EC" id="2.7.1.39" evidence="1"/>
<dbReference type="EMBL" id="CP000547">
    <property type="protein sequence ID" value="ABO02781.1"/>
    <property type="molecule type" value="Genomic_DNA"/>
</dbReference>
<dbReference type="RefSeq" id="WP_004190439.1">
    <property type="nucleotide sequence ID" value="NZ_CP007801.1"/>
</dbReference>
<dbReference type="SMR" id="A3MBA7"/>
<dbReference type="KEGG" id="bmn:BMA10247_A0338"/>
<dbReference type="UniPathway" id="UPA00050">
    <property type="reaction ID" value="UER00064"/>
</dbReference>
<dbReference type="GO" id="GO:0005524">
    <property type="term" value="F:ATP binding"/>
    <property type="evidence" value="ECO:0007669"/>
    <property type="project" value="UniProtKB-KW"/>
</dbReference>
<dbReference type="GO" id="GO:0004413">
    <property type="term" value="F:homoserine kinase activity"/>
    <property type="evidence" value="ECO:0007669"/>
    <property type="project" value="UniProtKB-UniRule"/>
</dbReference>
<dbReference type="GO" id="GO:0009088">
    <property type="term" value="P:threonine biosynthetic process"/>
    <property type="evidence" value="ECO:0007669"/>
    <property type="project" value="UniProtKB-UniRule"/>
</dbReference>
<dbReference type="CDD" id="cd05153">
    <property type="entry name" value="HomoserineK_II"/>
    <property type="match status" value="1"/>
</dbReference>
<dbReference type="Gene3D" id="3.90.1200.10">
    <property type="match status" value="1"/>
</dbReference>
<dbReference type="Gene3D" id="3.30.200.20">
    <property type="entry name" value="Phosphorylase Kinase, domain 1"/>
    <property type="match status" value="1"/>
</dbReference>
<dbReference type="HAMAP" id="MF_00301">
    <property type="entry name" value="Homoser_kinase_2"/>
    <property type="match status" value="1"/>
</dbReference>
<dbReference type="InterPro" id="IPR002575">
    <property type="entry name" value="Aminoglycoside_PTrfase"/>
</dbReference>
<dbReference type="InterPro" id="IPR005280">
    <property type="entry name" value="Homoserine_kinase_II"/>
</dbReference>
<dbReference type="InterPro" id="IPR011009">
    <property type="entry name" value="Kinase-like_dom_sf"/>
</dbReference>
<dbReference type="InterPro" id="IPR050249">
    <property type="entry name" value="Pseudomonas-type_ThrB"/>
</dbReference>
<dbReference type="NCBIfam" id="NF003558">
    <property type="entry name" value="PRK05231.1"/>
    <property type="match status" value="1"/>
</dbReference>
<dbReference type="NCBIfam" id="TIGR00938">
    <property type="entry name" value="thrB_alt"/>
    <property type="match status" value="1"/>
</dbReference>
<dbReference type="PANTHER" id="PTHR21064:SF6">
    <property type="entry name" value="AMINOGLYCOSIDE PHOSPHOTRANSFERASE DOMAIN-CONTAINING PROTEIN"/>
    <property type="match status" value="1"/>
</dbReference>
<dbReference type="PANTHER" id="PTHR21064">
    <property type="entry name" value="AMINOGLYCOSIDE PHOSPHOTRANSFERASE DOMAIN-CONTAINING PROTEIN-RELATED"/>
    <property type="match status" value="1"/>
</dbReference>
<dbReference type="Pfam" id="PF01636">
    <property type="entry name" value="APH"/>
    <property type="match status" value="1"/>
</dbReference>
<dbReference type="SUPFAM" id="SSF56112">
    <property type="entry name" value="Protein kinase-like (PK-like)"/>
    <property type="match status" value="1"/>
</dbReference>